<comment type="function">
    <text evidence="1">Binds to the 23S rRNA.</text>
</comment>
<comment type="similarity">
    <text evidence="1">Belongs to the bacterial ribosomal protein bL9 family.</text>
</comment>
<gene>
    <name evidence="1" type="primary">rplI</name>
    <name type="ordered locus">Moth_0132</name>
</gene>
<accession>Q2RM68</accession>
<sequence length="150" mass="16618">MKVILTADVAKLGNRGTLVEVSEGYARNYLLPRGLAVEATAGRLKELDLEKKRREKKENQELENARRQAARLDGAVVKITTRAGETGKLFGSVTNKEIAEAIKNTFQISLDRRKIDLKEPIKALGSYEVTLKLHPTVQAHLRVQVVAEGS</sequence>
<organism>
    <name type="scientific">Moorella thermoacetica (strain ATCC 39073 / JCM 9320)</name>
    <dbReference type="NCBI Taxonomy" id="264732"/>
    <lineage>
        <taxon>Bacteria</taxon>
        <taxon>Bacillati</taxon>
        <taxon>Bacillota</taxon>
        <taxon>Clostridia</taxon>
        <taxon>Moorellales</taxon>
        <taxon>Moorellaceae</taxon>
        <taxon>Moorella</taxon>
    </lineage>
</organism>
<proteinExistence type="inferred from homology"/>
<reference key="1">
    <citation type="journal article" date="2008" name="Environ. Microbiol.">
        <title>The complete genome sequence of Moorella thermoacetica (f. Clostridium thermoaceticum).</title>
        <authorList>
            <person name="Pierce E."/>
            <person name="Xie G."/>
            <person name="Barabote R.D."/>
            <person name="Saunders E."/>
            <person name="Han C.S."/>
            <person name="Detter J.C."/>
            <person name="Richardson P."/>
            <person name="Brettin T.S."/>
            <person name="Das A."/>
            <person name="Ljungdahl L.G."/>
            <person name="Ragsdale S.W."/>
        </authorList>
    </citation>
    <scope>NUCLEOTIDE SEQUENCE [LARGE SCALE GENOMIC DNA]</scope>
    <source>
        <strain>ATCC 39073 / JCM 9320</strain>
    </source>
</reference>
<name>RL9_MOOTA</name>
<evidence type="ECO:0000255" key="1">
    <source>
        <dbReference type="HAMAP-Rule" id="MF_00503"/>
    </source>
</evidence>
<evidence type="ECO:0000305" key="2"/>
<protein>
    <recommendedName>
        <fullName evidence="1">Large ribosomal subunit protein bL9</fullName>
    </recommendedName>
    <alternativeName>
        <fullName evidence="2">50S ribosomal protein L9</fullName>
    </alternativeName>
</protein>
<dbReference type="EMBL" id="CP000232">
    <property type="protein sequence ID" value="ABC18471.1"/>
    <property type="molecule type" value="Genomic_DNA"/>
</dbReference>
<dbReference type="RefSeq" id="YP_429014.1">
    <property type="nucleotide sequence ID" value="NC_007644.1"/>
</dbReference>
<dbReference type="SMR" id="Q2RM68"/>
<dbReference type="STRING" id="264732.Moth_0132"/>
<dbReference type="EnsemblBacteria" id="ABC18471">
    <property type="protein sequence ID" value="ABC18471"/>
    <property type="gene ID" value="Moth_0132"/>
</dbReference>
<dbReference type="KEGG" id="mta:Moth_0132"/>
<dbReference type="PATRIC" id="fig|264732.11.peg.137"/>
<dbReference type="eggNOG" id="COG0359">
    <property type="taxonomic scope" value="Bacteria"/>
</dbReference>
<dbReference type="HOGENOM" id="CLU_078938_3_0_9"/>
<dbReference type="OrthoDB" id="9788336at2"/>
<dbReference type="GO" id="GO:1990904">
    <property type="term" value="C:ribonucleoprotein complex"/>
    <property type="evidence" value="ECO:0007669"/>
    <property type="project" value="UniProtKB-KW"/>
</dbReference>
<dbReference type="GO" id="GO:0005840">
    <property type="term" value="C:ribosome"/>
    <property type="evidence" value="ECO:0007669"/>
    <property type="project" value="UniProtKB-KW"/>
</dbReference>
<dbReference type="GO" id="GO:0019843">
    <property type="term" value="F:rRNA binding"/>
    <property type="evidence" value="ECO:0007669"/>
    <property type="project" value="UniProtKB-UniRule"/>
</dbReference>
<dbReference type="GO" id="GO:0003735">
    <property type="term" value="F:structural constituent of ribosome"/>
    <property type="evidence" value="ECO:0007669"/>
    <property type="project" value="InterPro"/>
</dbReference>
<dbReference type="GO" id="GO:0006412">
    <property type="term" value="P:translation"/>
    <property type="evidence" value="ECO:0007669"/>
    <property type="project" value="UniProtKB-UniRule"/>
</dbReference>
<dbReference type="FunFam" id="3.40.5.10:FF:000003">
    <property type="entry name" value="50S ribosomal protein L9"/>
    <property type="match status" value="1"/>
</dbReference>
<dbReference type="Gene3D" id="3.10.430.100">
    <property type="entry name" value="Ribosomal protein L9, C-terminal domain"/>
    <property type="match status" value="1"/>
</dbReference>
<dbReference type="Gene3D" id="3.40.5.10">
    <property type="entry name" value="Ribosomal protein L9, N-terminal domain"/>
    <property type="match status" value="1"/>
</dbReference>
<dbReference type="HAMAP" id="MF_00503">
    <property type="entry name" value="Ribosomal_bL9"/>
    <property type="match status" value="1"/>
</dbReference>
<dbReference type="InterPro" id="IPR000244">
    <property type="entry name" value="Ribosomal_bL9"/>
</dbReference>
<dbReference type="InterPro" id="IPR009027">
    <property type="entry name" value="Ribosomal_bL9/RNase_H1_N"/>
</dbReference>
<dbReference type="InterPro" id="IPR020594">
    <property type="entry name" value="Ribosomal_bL9_bac/chp"/>
</dbReference>
<dbReference type="InterPro" id="IPR020069">
    <property type="entry name" value="Ribosomal_bL9_C"/>
</dbReference>
<dbReference type="InterPro" id="IPR036791">
    <property type="entry name" value="Ribosomal_bL9_C_sf"/>
</dbReference>
<dbReference type="InterPro" id="IPR020070">
    <property type="entry name" value="Ribosomal_bL9_N"/>
</dbReference>
<dbReference type="InterPro" id="IPR036935">
    <property type="entry name" value="Ribosomal_bL9_N_sf"/>
</dbReference>
<dbReference type="NCBIfam" id="TIGR00158">
    <property type="entry name" value="L9"/>
    <property type="match status" value="1"/>
</dbReference>
<dbReference type="PANTHER" id="PTHR21368">
    <property type="entry name" value="50S RIBOSOMAL PROTEIN L9"/>
    <property type="match status" value="1"/>
</dbReference>
<dbReference type="Pfam" id="PF03948">
    <property type="entry name" value="Ribosomal_L9_C"/>
    <property type="match status" value="1"/>
</dbReference>
<dbReference type="Pfam" id="PF01281">
    <property type="entry name" value="Ribosomal_L9_N"/>
    <property type="match status" value="1"/>
</dbReference>
<dbReference type="SUPFAM" id="SSF55658">
    <property type="entry name" value="L9 N-domain-like"/>
    <property type="match status" value="1"/>
</dbReference>
<dbReference type="SUPFAM" id="SSF55653">
    <property type="entry name" value="Ribosomal protein L9 C-domain"/>
    <property type="match status" value="1"/>
</dbReference>
<dbReference type="PROSITE" id="PS00651">
    <property type="entry name" value="RIBOSOMAL_L9"/>
    <property type="match status" value="1"/>
</dbReference>
<keyword id="KW-0687">Ribonucleoprotein</keyword>
<keyword id="KW-0689">Ribosomal protein</keyword>
<keyword id="KW-0694">RNA-binding</keyword>
<keyword id="KW-0699">rRNA-binding</keyword>
<feature type="chain" id="PRO_0000236544" description="Large ribosomal subunit protein bL9">
    <location>
        <begin position="1"/>
        <end position="150"/>
    </location>
</feature>